<evidence type="ECO:0000250" key="1">
    <source>
        <dbReference type="UniProtKB" id="P25348"/>
    </source>
</evidence>
<evidence type="ECO:0000269" key="2">
    <source>
    </source>
</evidence>
<evidence type="ECO:0000305" key="3"/>
<sequence>MALLRGNSLAISQKMLSVFQASALPHISLRIFISPPSIANIWNSILLAVPKKKTSYTKKRSRLLSGKALKDKTVNRCPICGSFKLAHHLCSHCFRNIRREFNE</sequence>
<protein>
    <recommendedName>
        <fullName evidence="3">Large ribosomal subunit protein bL32m</fullName>
    </recommendedName>
    <alternativeName>
        <fullName>Probable 54S ribosomal protein L32, mitochondrial</fullName>
    </alternativeName>
</protein>
<gene>
    <name type="primary">mrpl32</name>
    <name type="ORF">SPBC1604.13c</name>
</gene>
<name>RM32_SCHPO</name>
<reference key="1">
    <citation type="journal article" date="2002" name="Nature">
        <title>The genome sequence of Schizosaccharomyces pombe.</title>
        <authorList>
            <person name="Wood V."/>
            <person name="Gwilliam R."/>
            <person name="Rajandream M.A."/>
            <person name="Lyne M.H."/>
            <person name="Lyne R."/>
            <person name="Stewart A."/>
            <person name="Sgouros J.G."/>
            <person name="Peat N."/>
            <person name="Hayles J."/>
            <person name="Baker S.G."/>
            <person name="Basham D."/>
            <person name="Bowman S."/>
            <person name="Brooks K."/>
            <person name="Brown D."/>
            <person name="Brown S."/>
            <person name="Chillingworth T."/>
            <person name="Churcher C.M."/>
            <person name="Collins M."/>
            <person name="Connor R."/>
            <person name="Cronin A."/>
            <person name="Davis P."/>
            <person name="Feltwell T."/>
            <person name="Fraser A."/>
            <person name="Gentles S."/>
            <person name="Goble A."/>
            <person name="Hamlin N."/>
            <person name="Harris D.E."/>
            <person name="Hidalgo J."/>
            <person name="Hodgson G."/>
            <person name="Holroyd S."/>
            <person name="Hornsby T."/>
            <person name="Howarth S."/>
            <person name="Huckle E.J."/>
            <person name="Hunt S."/>
            <person name="Jagels K."/>
            <person name="James K.D."/>
            <person name="Jones L."/>
            <person name="Jones M."/>
            <person name="Leather S."/>
            <person name="McDonald S."/>
            <person name="McLean J."/>
            <person name="Mooney P."/>
            <person name="Moule S."/>
            <person name="Mungall K.L."/>
            <person name="Murphy L.D."/>
            <person name="Niblett D."/>
            <person name="Odell C."/>
            <person name="Oliver K."/>
            <person name="O'Neil S."/>
            <person name="Pearson D."/>
            <person name="Quail M.A."/>
            <person name="Rabbinowitsch E."/>
            <person name="Rutherford K.M."/>
            <person name="Rutter S."/>
            <person name="Saunders D."/>
            <person name="Seeger K."/>
            <person name="Sharp S."/>
            <person name="Skelton J."/>
            <person name="Simmonds M.N."/>
            <person name="Squares R."/>
            <person name="Squares S."/>
            <person name="Stevens K."/>
            <person name="Taylor K."/>
            <person name="Taylor R.G."/>
            <person name="Tivey A."/>
            <person name="Walsh S.V."/>
            <person name="Warren T."/>
            <person name="Whitehead S."/>
            <person name="Woodward J.R."/>
            <person name="Volckaert G."/>
            <person name="Aert R."/>
            <person name="Robben J."/>
            <person name="Grymonprez B."/>
            <person name="Weltjens I."/>
            <person name="Vanstreels E."/>
            <person name="Rieger M."/>
            <person name="Schaefer M."/>
            <person name="Mueller-Auer S."/>
            <person name="Gabel C."/>
            <person name="Fuchs M."/>
            <person name="Duesterhoeft A."/>
            <person name="Fritzc C."/>
            <person name="Holzer E."/>
            <person name="Moestl D."/>
            <person name="Hilbert H."/>
            <person name="Borzym K."/>
            <person name="Langer I."/>
            <person name="Beck A."/>
            <person name="Lehrach H."/>
            <person name="Reinhardt R."/>
            <person name="Pohl T.M."/>
            <person name="Eger P."/>
            <person name="Zimmermann W."/>
            <person name="Wedler H."/>
            <person name="Wambutt R."/>
            <person name="Purnelle B."/>
            <person name="Goffeau A."/>
            <person name="Cadieu E."/>
            <person name="Dreano S."/>
            <person name="Gloux S."/>
            <person name="Lelaure V."/>
            <person name="Mottier S."/>
            <person name="Galibert F."/>
            <person name="Aves S.J."/>
            <person name="Xiang Z."/>
            <person name="Hunt C."/>
            <person name="Moore K."/>
            <person name="Hurst S.M."/>
            <person name="Lucas M."/>
            <person name="Rochet M."/>
            <person name="Gaillardin C."/>
            <person name="Tallada V.A."/>
            <person name="Garzon A."/>
            <person name="Thode G."/>
            <person name="Daga R.R."/>
            <person name="Cruzado L."/>
            <person name="Jimenez J."/>
            <person name="Sanchez M."/>
            <person name="del Rey F."/>
            <person name="Benito J."/>
            <person name="Dominguez A."/>
            <person name="Revuelta J.L."/>
            <person name="Moreno S."/>
            <person name="Armstrong J."/>
            <person name="Forsburg S.L."/>
            <person name="Cerutti L."/>
            <person name="Lowe T."/>
            <person name="McCombie W.R."/>
            <person name="Paulsen I."/>
            <person name="Potashkin J."/>
            <person name="Shpakovski G.V."/>
            <person name="Ussery D."/>
            <person name="Barrell B.G."/>
            <person name="Nurse P."/>
        </authorList>
    </citation>
    <scope>NUCLEOTIDE SEQUENCE [LARGE SCALE GENOMIC DNA]</scope>
    <source>
        <strain>972 / ATCC 24843</strain>
    </source>
</reference>
<reference key="2">
    <citation type="journal article" date="2006" name="Nat. Biotechnol.">
        <title>ORFeome cloning and global analysis of protein localization in the fission yeast Schizosaccharomyces pombe.</title>
        <authorList>
            <person name="Matsuyama A."/>
            <person name="Arai R."/>
            <person name="Yashiroda Y."/>
            <person name="Shirai A."/>
            <person name="Kamata A."/>
            <person name="Sekido S."/>
            <person name="Kobayashi Y."/>
            <person name="Hashimoto A."/>
            <person name="Hamamoto M."/>
            <person name="Hiraoka Y."/>
            <person name="Horinouchi S."/>
            <person name="Yoshida M."/>
        </authorList>
    </citation>
    <scope>SUBCELLULAR LOCATION [LARGE SCALE ANALYSIS]</scope>
</reference>
<accession>O94379</accession>
<dbReference type="EMBL" id="CU329671">
    <property type="protein sequence ID" value="CAA22346.1"/>
    <property type="molecule type" value="Genomic_DNA"/>
</dbReference>
<dbReference type="PIR" id="T39501">
    <property type="entry name" value="T39501"/>
</dbReference>
<dbReference type="RefSeq" id="NP_596627.1">
    <property type="nucleotide sequence ID" value="NM_001022548.2"/>
</dbReference>
<dbReference type="SMR" id="O94379"/>
<dbReference type="ComplexPortal" id="CPX-10323">
    <property type="entry name" value="54S mitochondrial large ribosomal subunit"/>
</dbReference>
<dbReference type="FunCoup" id="O94379">
    <property type="interactions" value="200"/>
</dbReference>
<dbReference type="STRING" id="284812.O94379"/>
<dbReference type="SwissPalm" id="O94379"/>
<dbReference type="PaxDb" id="4896-SPBC1604.13c.1"/>
<dbReference type="EnsemblFungi" id="SPBC1604.13c.1">
    <property type="protein sequence ID" value="SPBC1604.13c.1:pep"/>
    <property type="gene ID" value="SPBC1604.13c"/>
</dbReference>
<dbReference type="GeneID" id="2539681"/>
<dbReference type="KEGG" id="spo:2539681"/>
<dbReference type="PomBase" id="SPBC1604.13c">
    <property type="gene designation" value="mrpl32"/>
</dbReference>
<dbReference type="VEuPathDB" id="FungiDB:SPBC1604.13c"/>
<dbReference type="eggNOG" id="KOG4080">
    <property type="taxonomic scope" value="Eukaryota"/>
</dbReference>
<dbReference type="HOGENOM" id="CLU_129084_0_2_1"/>
<dbReference type="InParanoid" id="O94379"/>
<dbReference type="OMA" id="SHCFRNI"/>
<dbReference type="PhylomeDB" id="O94379"/>
<dbReference type="Reactome" id="R-SPO-9837999">
    <property type="pathway name" value="Mitochondrial protein degradation"/>
</dbReference>
<dbReference type="PRO" id="PR:O94379"/>
<dbReference type="Proteomes" id="UP000002485">
    <property type="component" value="Chromosome II"/>
</dbReference>
<dbReference type="GO" id="GO:0005762">
    <property type="term" value="C:mitochondrial large ribosomal subunit"/>
    <property type="evidence" value="ECO:0000318"/>
    <property type="project" value="GO_Central"/>
</dbReference>
<dbReference type="GO" id="GO:0005739">
    <property type="term" value="C:mitochondrion"/>
    <property type="evidence" value="ECO:0007005"/>
    <property type="project" value="PomBase"/>
</dbReference>
<dbReference type="GO" id="GO:0046872">
    <property type="term" value="F:metal ion binding"/>
    <property type="evidence" value="ECO:0007669"/>
    <property type="project" value="UniProtKB-KW"/>
</dbReference>
<dbReference type="GO" id="GO:0003735">
    <property type="term" value="F:structural constituent of ribosome"/>
    <property type="evidence" value="ECO:0000318"/>
    <property type="project" value="GO_Central"/>
</dbReference>
<dbReference type="GO" id="GO:0032543">
    <property type="term" value="P:mitochondrial translation"/>
    <property type="evidence" value="ECO:0000250"/>
    <property type="project" value="PomBase"/>
</dbReference>
<dbReference type="HAMAP" id="MF_00340">
    <property type="entry name" value="Ribosomal_bL32"/>
    <property type="match status" value="1"/>
</dbReference>
<dbReference type="InterPro" id="IPR051991">
    <property type="entry name" value="Mitoribosomal_protein_bL32"/>
</dbReference>
<dbReference type="InterPro" id="IPR002677">
    <property type="entry name" value="Ribosomal_bL32"/>
</dbReference>
<dbReference type="InterPro" id="IPR011332">
    <property type="entry name" value="Ribosomal_zn-bd"/>
</dbReference>
<dbReference type="NCBIfam" id="TIGR01031">
    <property type="entry name" value="rpmF_bact"/>
    <property type="match status" value="1"/>
</dbReference>
<dbReference type="PANTHER" id="PTHR21026">
    <property type="entry name" value="39S RIBOSOMAL PROTEIN L32, MITOCHONDRIAL"/>
    <property type="match status" value="1"/>
</dbReference>
<dbReference type="PANTHER" id="PTHR21026:SF2">
    <property type="entry name" value="LARGE RIBOSOMAL SUBUNIT PROTEIN BL32M"/>
    <property type="match status" value="1"/>
</dbReference>
<dbReference type="Pfam" id="PF01783">
    <property type="entry name" value="Ribosomal_L32p"/>
    <property type="match status" value="1"/>
</dbReference>
<dbReference type="SUPFAM" id="SSF57829">
    <property type="entry name" value="Zn-binding ribosomal proteins"/>
    <property type="match status" value="1"/>
</dbReference>
<organism>
    <name type="scientific">Schizosaccharomyces pombe (strain 972 / ATCC 24843)</name>
    <name type="common">Fission yeast</name>
    <dbReference type="NCBI Taxonomy" id="284812"/>
    <lineage>
        <taxon>Eukaryota</taxon>
        <taxon>Fungi</taxon>
        <taxon>Dikarya</taxon>
        <taxon>Ascomycota</taxon>
        <taxon>Taphrinomycotina</taxon>
        <taxon>Schizosaccharomycetes</taxon>
        <taxon>Schizosaccharomycetales</taxon>
        <taxon>Schizosaccharomycetaceae</taxon>
        <taxon>Schizosaccharomyces</taxon>
    </lineage>
</organism>
<proteinExistence type="inferred from homology"/>
<keyword id="KW-0479">Metal-binding</keyword>
<keyword id="KW-0496">Mitochondrion</keyword>
<keyword id="KW-1185">Reference proteome</keyword>
<keyword id="KW-0687">Ribonucleoprotein</keyword>
<keyword id="KW-0689">Ribosomal protein</keyword>
<keyword id="KW-0809">Transit peptide</keyword>
<keyword id="KW-0862">Zinc</keyword>
<comment type="function">
    <text evidence="1">Component of the mitochondrial ribosome (mitoribosome), a dedicated translation machinery responsible for the synthesis of mitochondrial genome-encoded proteins, including at least some of the essential transmembrane subunits of the mitochondrial respiratory chain. The mitoribosomes are attached to the mitochondrial inner membrane and translation products are cotranslationally integrated into the membrane.</text>
</comment>
<comment type="subunit">
    <text evidence="1">Component of the mitochondrial large ribosomal subunit (mt-LSU). Mature yeast 74S mitochondrial ribosomes consist of a small (37S) and a large (54S) subunit. The 37S small subunit contains a 15S ribosomal RNA (15S mt-rRNA) and at least 32 different proteins. The 54S large subunit contains a 21S rRNA (21S mt-rRNA) and at least 45 different proteins. bL32m has a zinc binding site.</text>
</comment>
<comment type="subcellular location">
    <subcellularLocation>
        <location evidence="2">Mitochondrion</location>
    </subcellularLocation>
</comment>
<comment type="PTM">
    <text evidence="1">MRPL32 precursor is processed by the m-AAA protease, which cleaves the N-terminal transit peptide (By similarity). Cleavage by the m-AAA protease takes place prior to assembly into the large subunit, an essential step for mitochondrial ribosome (mitoribosome) assembly (By similarity). Proper processing by the m-AAA protease is dependent on the zinc-binding region within the tightly folded C-terminal domain of MRPL32: zinc-dependent folding halts degradation initiated from the N-terminus and triggers the release of mature mrpl32 (By similarity).</text>
</comment>
<comment type="similarity">
    <text evidence="3">Belongs to the bacterial ribosomal protein bL32 family.</text>
</comment>
<feature type="transit peptide" description="Mitochondrion" evidence="1">
    <location>
        <begin position="1"/>
        <end position="47"/>
    </location>
</feature>
<feature type="chain" id="PRO_0000030517" description="Large ribosomal subunit protein bL32m">
    <location>
        <begin position="48"/>
        <end position="103"/>
    </location>
</feature>
<feature type="binding site" evidence="1">
    <location>
        <position position="77"/>
    </location>
    <ligand>
        <name>Zn(2+)</name>
        <dbReference type="ChEBI" id="CHEBI:29105"/>
    </ligand>
</feature>
<feature type="binding site" evidence="1">
    <location>
        <position position="80"/>
    </location>
    <ligand>
        <name>Zn(2+)</name>
        <dbReference type="ChEBI" id="CHEBI:29105"/>
    </ligand>
</feature>
<feature type="binding site" evidence="1">
    <location>
        <position position="90"/>
    </location>
    <ligand>
        <name>Zn(2+)</name>
        <dbReference type="ChEBI" id="CHEBI:29105"/>
    </ligand>
</feature>
<feature type="binding site" evidence="1">
    <location>
        <position position="93"/>
    </location>
    <ligand>
        <name>Zn(2+)</name>
        <dbReference type="ChEBI" id="CHEBI:29105"/>
    </ligand>
</feature>